<evidence type="ECO:0000255" key="1">
    <source>
        <dbReference type="PROSITE-ProRule" id="PRU01373"/>
    </source>
</evidence>
<evidence type="ECO:0000269" key="2">
    <source>
    </source>
</evidence>
<evidence type="ECO:0000269" key="3">
    <source>
    </source>
</evidence>
<evidence type="ECO:0000269" key="4">
    <source>
    </source>
</evidence>
<evidence type="ECO:0000305" key="5"/>
<dbReference type="EC" id="2.-.-.-"/>
<dbReference type="EMBL" id="U00096">
    <property type="protein sequence ID" value="AAC73906.1"/>
    <property type="molecule type" value="Genomic_DNA"/>
</dbReference>
<dbReference type="EMBL" id="AP009048">
    <property type="protein sequence ID" value="BAA35500.1"/>
    <property type="molecule type" value="Genomic_DNA"/>
</dbReference>
<dbReference type="PIR" id="C64819">
    <property type="entry name" value="C64819"/>
</dbReference>
<dbReference type="RefSeq" id="NP_415340.1">
    <property type="nucleotide sequence ID" value="NC_000913.3"/>
</dbReference>
<dbReference type="SMR" id="P0AAX8"/>
<dbReference type="BioGRID" id="4261201">
    <property type="interactions" value="17"/>
</dbReference>
<dbReference type="BioGRID" id="849815">
    <property type="interactions" value="1"/>
</dbReference>
<dbReference type="DIP" id="DIP-48069N"/>
<dbReference type="FunCoup" id="P0AAX8">
    <property type="interactions" value="77"/>
</dbReference>
<dbReference type="IntAct" id="P0AAX8">
    <property type="interactions" value="4"/>
</dbReference>
<dbReference type="STRING" id="511145.b0819"/>
<dbReference type="MEROPS" id="C82.A04"/>
<dbReference type="jPOST" id="P0AAX8"/>
<dbReference type="PaxDb" id="511145-b0819"/>
<dbReference type="EnsemblBacteria" id="AAC73906">
    <property type="protein sequence ID" value="AAC73906"/>
    <property type="gene ID" value="b0819"/>
</dbReference>
<dbReference type="GeneID" id="945441"/>
<dbReference type="KEGG" id="ecj:JW0803"/>
<dbReference type="KEGG" id="eco:b0819"/>
<dbReference type="KEGG" id="ecoc:C3026_05150"/>
<dbReference type="PATRIC" id="fig|511145.12.peg.846"/>
<dbReference type="EchoBASE" id="EB3108"/>
<dbReference type="eggNOG" id="COG1376">
    <property type="taxonomic scope" value="Bacteria"/>
</dbReference>
<dbReference type="HOGENOM" id="CLU_046834_0_1_6"/>
<dbReference type="InParanoid" id="P0AAX8"/>
<dbReference type="OMA" id="FAAQFQM"/>
<dbReference type="OrthoDB" id="9787225at2"/>
<dbReference type="PhylomeDB" id="P0AAX8"/>
<dbReference type="BioCyc" id="EcoCyc:G6422-MONOMER"/>
<dbReference type="BioCyc" id="MetaCyc:G6422-MONOMER"/>
<dbReference type="UniPathway" id="UPA00219"/>
<dbReference type="PRO" id="PR:P0AAX8"/>
<dbReference type="Proteomes" id="UP000000625">
    <property type="component" value="Chromosome"/>
</dbReference>
<dbReference type="GO" id="GO:0030288">
    <property type="term" value="C:outer membrane-bounded periplasmic space"/>
    <property type="evidence" value="ECO:0000314"/>
    <property type="project" value="EcoCyc"/>
</dbReference>
<dbReference type="GO" id="GO:0016757">
    <property type="term" value="F:glycosyltransferase activity"/>
    <property type="evidence" value="ECO:0007669"/>
    <property type="project" value="UniProtKB-KW"/>
</dbReference>
<dbReference type="GO" id="GO:0071972">
    <property type="term" value="F:peptidoglycan L,D-transpeptidase activity"/>
    <property type="evidence" value="ECO:0000314"/>
    <property type="project" value="EcoCyc"/>
</dbReference>
<dbReference type="GO" id="GO:0071555">
    <property type="term" value="P:cell wall organization"/>
    <property type="evidence" value="ECO:0007669"/>
    <property type="project" value="UniProtKB-KW"/>
</dbReference>
<dbReference type="GO" id="GO:0018104">
    <property type="term" value="P:peptidoglycan-protein cross-linking"/>
    <property type="evidence" value="ECO:0000314"/>
    <property type="project" value="EcoCyc"/>
</dbReference>
<dbReference type="GO" id="GO:0008360">
    <property type="term" value="P:regulation of cell shape"/>
    <property type="evidence" value="ECO:0007669"/>
    <property type="project" value="UniProtKB-KW"/>
</dbReference>
<dbReference type="CDD" id="cd16913">
    <property type="entry name" value="YkuD_like"/>
    <property type="match status" value="1"/>
</dbReference>
<dbReference type="FunFam" id="2.40.440.10:FF:000001">
    <property type="entry name" value="L,D-transpeptidase YbiS"/>
    <property type="match status" value="1"/>
</dbReference>
<dbReference type="Gene3D" id="2.40.440.10">
    <property type="entry name" value="L,D-transpeptidase catalytic domain-like"/>
    <property type="match status" value="1"/>
</dbReference>
<dbReference type="InterPro" id="IPR050979">
    <property type="entry name" value="LD-transpeptidase"/>
</dbReference>
<dbReference type="InterPro" id="IPR005490">
    <property type="entry name" value="LD_TPept_cat_dom"/>
</dbReference>
<dbReference type="InterPro" id="IPR041597">
    <property type="entry name" value="Ldt_C"/>
</dbReference>
<dbReference type="InterPro" id="IPR038063">
    <property type="entry name" value="Transpep_catalytic_dom"/>
</dbReference>
<dbReference type="NCBIfam" id="NF007612">
    <property type="entry name" value="PRK10260.1"/>
    <property type="match status" value="1"/>
</dbReference>
<dbReference type="PANTHER" id="PTHR30582">
    <property type="entry name" value="L,D-TRANSPEPTIDASE"/>
    <property type="match status" value="1"/>
</dbReference>
<dbReference type="PANTHER" id="PTHR30582:SF31">
    <property type="entry name" value="L,D-TRANSPEPTIDASE YBIS-RELATED"/>
    <property type="match status" value="1"/>
</dbReference>
<dbReference type="Pfam" id="PF17969">
    <property type="entry name" value="Ldt_C"/>
    <property type="match status" value="1"/>
</dbReference>
<dbReference type="Pfam" id="PF03734">
    <property type="entry name" value="YkuD"/>
    <property type="match status" value="1"/>
</dbReference>
<dbReference type="SUPFAM" id="SSF141523">
    <property type="entry name" value="L,D-transpeptidase catalytic domain-like"/>
    <property type="match status" value="1"/>
</dbReference>
<dbReference type="PROSITE" id="PS52029">
    <property type="entry name" value="LD_TPASE"/>
    <property type="match status" value="1"/>
</dbReference>
<accession>P0AAX8</accession>
<accession>P75789</accession>
<reference key="1">
    <citation type="journal article" date="1996" name="DNA Res.">
        <title>A 718-kb DNA sequence of the Escherichia coli K-12 genome corresponding to the 12.7-28.0 min region on the linkage map.</title>
        <authorList>
            <person name="Oshima T."/>
            <person name="Aiba H."/>
            <person name="Baba T."/>
            <person name="Fujita K."/>
            <person name="Hayashi K."/>
            <person name="Honjo A."/>
            <person name="Ikemoto K."/>
            <person name="Inada T."/>
            <person name="Itoh T."/>
            <person name="Kajihara M."/>
            <person name="Kanai K."/>
            <person name="Kashimoto K."/>
            <person name="Kimura S."/>
            <person name="Kitagawa M."/>
            <person name="Makino K."/>
            <person name="Masuda S."/>
            <person name="Miki T."/>
            <person name="Mizobuchi K."/>
            <person name="Mori H."/>
            <person name="Motomura K."/>
            <person name="Nakamura Y."/>
            <person name="Nashimoto H."/>
            <person name="Nishio Y."/>
            <person name="Saito N."/>
            <person name="Sampei G."/>
            <person name="Seki Y."/>
            <person name="Tagami H."/>
            <person name="Takemoto K."/>
            <person name="Wada C."/>
            <person name="Yamamoto Y."/>
            <person name="Yano M."/>
            <person name="Horiuchi T."/>
        </authorList>
    </citation>
    <scope>NUCLEOTIDE SEQUENCE [LARGE SCALE GENOMIC DNA]</scope>
    <source>
        <strain>K12 / W3110 / ATCC 27325 / DSM 5911</strain>
    </source>
</reference>
<reference key="2">
    <citation type="journal article" date="1997" name="Science">
        <title>The complete genome sequence of Escherichia coli K-12.</title>
        <authorList>
            <person name="Blattner F.R."/>
            <person name="Plunkett G. III"/>
            <person name="Bloch C.A."/>
            <person name="Perna N.T."/>
            <person name="Burland V."/>
            <person name="Riley M."/>
            <person name="Collado-Vides J."/>
            <person name="Glasner J.D."/>
            <person name="Rode C.K."/>
            <person name="Mayhew G.F."/>
            <person name="Gregor J."/>
            <person name="Davis N.W."/>
            <person name="Kirkpatrick H.A."/>
            <person name="Goeden M.A."/>
            <person name="Rose D.J."/>
            <person name="Mau B."/>
            <person name="Shao Y."/>
        </authorList>
    </citation>
    <scope>NUCLEOTIDE SEQUENCE [LARGE SCALE GENOMIC DNA]</scope>
    <source>
        <strain>K12 / MG1655 / ATCC 47076</strain>
    </source>
</reference>
<reference key="3">
    <citation type="journal article" date="2006" name="Mol. Syst. Biol.">
        <title>Highly accurate genome sequences of Escherichia coli K-12 strains MG1655 and W3110.</title>
        <authorList>
            <person name="Hayashi K."/>
            <person name="Morooka N."/>
            <person name="Yamamoto Y."/>
            <person name="Fujita K."/>
            <person name="Isono K."/>
            <person name="Choi S."/>
            <person name="Ohtsubo E."/>
            <person name="Baba T."/>
            <person name="Wanner B.L."/>
            <person name="Mori H."/>
            <person name="Horiuchi T."/>
        </authorList>
    </citation>
    <scope>NUCLEOTIDE SEQUENCE [LARGE SCALE GENOMIC DNA]</scope>
    <source>
        <strain>K12 / W3110 / ATCC 27325 / DSM 5911</strain>
    </source>
</reference>
<reference key="4">
    <citation type="journal article" date="1997" name="Electrophoresis">
        <title>Comparing the predicted and observed properties of proteins encoded in the genome of Escherichia coli K-12.</title>
        <authorList>
            <person name="Link A.J."/>
            <person name="Robison K."/>
            <person name="Church G.M."/>
        </authorList>
    </citation>
    <scope>PROTEIN SEQUENCE OF 25-36</scope>
    <source>
        <strain>K12 / EMG2</strain>
    </source>
</reference>
<reference key="5">
    <citation type="journal article" date="1999" name="Electrophoresis">
        <title>Enrichment of low abundance proteins of Escherichia coli by hydroxyapatite chromatography.</title>
        <authorList>
            <person name="Fountoulakis M."/>
            <person name="Takacs M.-F."/>
            <person name="Berndt P."/>
            <person name="Langen H."/>
            <person name="Takacs B."/>
        </authorList>
    </citation>
    <scope>IDENTIFICATION BY MASS SPECTROMETRY</scope>
    <source>
        <strain>B / BL21</strain>
    </source>
</reference>
<reference key="6">
    <citation type="journal article" date="2008" name="J. Bacteriol.">
        <title>Identification of the L,D-transpeptidases for peptidoglycan cross-linking in Escherichia coli.</title>
        <authorList>
            <person name="Magnet S."/>
            <person name="Dubost L."/>
            <person name="Marie A."/>
            <person name="Arthur M."/>
            <person name="Gutmann L."/>
        </authorList>
    </citation>
    <scope>FUNCTION</scope>
    <scope>DISRUPTION PHENOTYPE</scope>
    <source>
        <strain>K12 / BW25113</strain>
    </source>
</reference>
<reference key="7">
    <citation type="journal article" date="2009" name="Science">
        <title>A periplasmic reducing system protects single cysteine residues from oxidation.</title>
        <authorList>
            <person name="Depuydt M."/>
            <person name="Leonard S.E."/>
            <person name="Vertommen D."/>
            <person name="Denoncin K."/>
            <person name="Morsomme P."/>
            <person name="Wahni K."/>
            <person name="Messens J."/>
            <person name="Carroll K.S."/>
            <person name="Collet J.F."/>
        </authorList>
    </citation>
    <scope>IDENTIFICATION BY MASS SPECTROMETRY</scope>
    <scope>MUTAGENESIS OF CYS-210</scope>
    <scope>INTERACTION WITH DSBG</scope>
    <source>
        <strain>K12 / MC1000 / ATCC 39531</strain>
    </source>
</reference>
<feature type="signal peptide" evidence="4">
    <location>
        <begin position="1"/>
        <end position="24"/>
    </location>
</feature>
<feature type="chain" id="PRO_0000013813" description="Probable L,D-transpeptidase YbiS">
    <location>
        <begin position="25"/>
        <end position="306"/>
    </location>
</feature>
<feature type="domain" description="L,D-TPase catalytic" evidence="1">
    <location>
        <begin position="99"/>
        <end position="234"/>
    </location>
</feature>
<feature type="active site" description="Proton donor/acceptor" evidence="1">
    <location>
        <position position="194"/>
    </location>
</feature>
<feature type="active site" description="Nucleophile" evidence="1">
    <location>
        <position position="210"/>
    </location>
</feature>
<feature type="mutagenesis site" description="Protein is unable to form sulfenic acid adducts." evidence="3">
    <original>C</original>
    <variation>A</variation>
    <location>
        <position position="210"/>
    </location>
</feature>
<proteinExistence type="evidence at protein level"/>
<comment type="function">
    <text evidence="2">Responsible, at least in part, for anchoring of the major outer membrane lipoprotein (Lpp, also known as the Braun lipoprotein) to the peptidoglycan via a meso-diaminopimelyl-L-Lys- bond on the terminal residue of Lpp. Can be oxidized in vivo, its reduction depends preferentially on DsbG, although DsbC is able to partially replace DsbG.</text>
</comment>
<comment type="pathway">
    <text>Cell wall biogenesis; peptidoglycan biosynthesis.</text>
</comment>
<comment type="subunit">
    <text evidence="3">Interacts with DsbG.</text>
</comment>
<comment type="subcellular location">
    <subcellularLocation>
        <location>Periplasm</location>
    </subcellularLocation>
</comment>
<comment type="PTM">
    <text>In vivo a sulfenic acid can be formed on Cys-210, which probably inactivates the protein. This disulfide is subsequently reduced by DsbG and DsbC.</text>
</comment>
<comment type="disruption phenotype">
    <text evidence="2">Simultaneous disruption of erfK, ybiS, ycfS and ynhG leads to loss of covalent anchoring of the major outer membrane lipoprotein (Lpp) to the peptidoglycan. Complementation with ybiS restores most of this anchoring.</text>
</comment>
<comment type="similarity">
    <text evidence="5">Belongs to the YkuD family.</text>
</comment>
<keyword id="KW-0133">Cell shape</keyword>
<keyword id="KW-0961">Cell wall biogenesis/degradation</keyword>
<keyword id="KW-0903">Direct protein sequencing</keyword>
<keyword id="KW-0328">Glycosyltransferase</keyword>
<keyword id="KW-0378">Hydrolase</keyword>
<keyword id="KW-0573">Peptidoglycan synthesis</keyword>
<keyword id="KW-0574">Periplasm</keyword>
<keyword id="KW-1185">Reference proteome</keyword>
<keyword id="KW-0732">Signal</keyword>
<keyword id="KW-0808">Transferase</keyword>
<protein>
    <recommendedName>
        <fullName>Probable L,D-transpeptidase YbiS</fullName>
        <ecNumber>2.-.-.-</ecNumber>
    </recommendedName>
</protein>
<gene>
    <name type="primary">ybiS</name>
    <name type="ordered locus">b0819</name>
    <name type="ordered locus">JW0803</name>
</gene>
<sequence>MNMKLKTLFAAAFAVVGFCSTASAVTYPLPTDGSRLVGQNQVITIPEGNTQPLEYFAAEYQMGLSNMMEANPGVDTFLPKGGTVLNIPQQLILPDTVHEGIVINSAEMRLYYYPKGTNTVIVLPIGIGQLGKDTPINWTTKVERKKAGPTWTPTAKMHAEYRAAGEPLPAVVPAGPDNPMGLYALYIGRLYAIHGTNANFGIGLRVSHGCVRLRNEDIKFLFEKVPVGTRVQFIDEPVKATTEPDGSRYIEVHNPLSTTEAQFEGQEIVPITLTKSVQTVTGQPDVDQVVLDEAIKNRSGMPVRLN</sequence>
<organism>
    <name type="scientific">Escherichia coli (strain K12)</name>
    <dbReference type="NCBI Taxonomy" id="83333"/>
    <lineage>
        <taxon>Bacteria</taxon>
        <taxon>Pseudomonadati</taxon>
        <taxon>Pseudomonadota</taxon>
        <taxon>Gammaproteobacteria</taxon>
        <taxon>Enterobacterales</taxon>
        <taxon>Enterobacteriaceae</taxon>
        <taxon>Escherichia</taxon>
    </lineage>
</organism>
<name>YBIS_ECOLI</name>